<reference key="1">
    <citation type="submission" date="2008-02" db="EMBL/GenBank/DDBJ databases">
        <title>Complete sequence of Haemophilus somnus 2336.</title>
        <authorList>
            <consortium name="US DOE Joint Genome Institute"/>
            <person name="Siddaramappa S."/>
            <person name="Duncan A.J."/>
            <person name="Challacombe J.F."/>
            <person name="Rainey D."/>
            <person name="Gillaspy A.F."/>
            <person name="Carson M."/>
            <person name="Gipson J."/>
            <person name="Gipson M."/>
            <person name="Bruce D."/>
            <person name="Detter J.C."/>
            <person name="Han C.S."/>
            <person name="Land M."/>
            <person name="Tapia R."/>
            <person name="Thompson L.S."/>
            <person name="Orvis J."/>
            <person name="Zaitshik J."/>
            <person name="Barnes G."/>
            <person name="Brettin T.S."/>
            <person name="Dyer D.W."/>
            <person name="Inzana T.J."/>
        </authorList>
    </citation>
    <scope>NUCLEOTIDE SEQUENCE [LARGE SCALE GENOMIC DNA]</scope>
    <source>
        <strain>2336</strain>
    </source>
</reference>
<evidence type="ECO:0000255" key="1">
    <source>
        <dbReference type="HAMAP-Rule" id="MF_00004"/>
    </source>
</evidence>
<keyword id="KW-0963">Cytoplasm</keyword>
<keyword id="KW-0328">Glycosyltransferase</keyword>
<keyword id="KW-0660">Purine salvage</keyword>
<keyword id="KW-0808">Transferase</keyword>
<protein>
    <recommendedName>
        <fullName evidence="1">Adenine phosphoribosyltransferase</fullName>
        <shortName evidence="1">APRT</shortName>
        <ecNumber evidence="1">2.4.2.7</ecNumber>
    </recommendedName>
</protein>
<dbReference type="EC" id="2.4.2.7" evidence="1"/>
<dbReference type="EMBL" id="CP000947">
    <property type="protein sequence ID" value="ACA31999.1"/>
    <property type="molecule type" value="Genomic_DNA"/>
</dbReference>
<dbReference type="RefSeq" id="WP_012341218.1">
    <property type="nucleotide sequence ID" value="NC_010519.1"/>
</dbReference>
<dbReference type="SMR" id="B0UWQ8"/>
<dbReference type="STRING" id="228400.HSM_0362"/>
<dbReference type="GeneID" id="31486642"/>
<dbReference type="KEGG" id="hsm:HSM_0362"/>
<dbReference type="HOGENOM" id="CLU_063339_3_0_6"/>
<dbReference type="UniPathway" id="UPA00588">
    <property type="reaction ID" value="UER00646"/>
</dbReference>
<dbReference type="GO" id="GO:0005829">
    <property type="term" value="C:cytosol"/>
    <property type="evidence" value="ECO:0007669"/>
    <property type="project" value="TreeGrafter"/>
</dbReference>
<dbReference type="GO" id="GO:0003999">
    <property type="term" value="F:adenine phosphoribosyltransferase activity"/>
    <property type="evidence" value="ECO:0007669"/>
    <property type="project" value="UniProtKB-UniRule"/>
</dbReference>
<dbReference type="GO" id="GO:0006168">
    <property type="term" value="P:adenine salvage"/>
    <property type="evidence" value="ECO:0007669"/>
    <property type="project" value="InterPro"/>
</dbReference>
<dbReference type="GO" id="GO:0044209">
    <property type="term" value="P:AMP salvage"/>
    <property type="evidence" value="ECO:0007669"/>
    <property type="project" value="UniProtKB-UniRule"/>
</dbReference>
<dbReference type="GO" id="GO:0006166">
    <property type="term" value="P:purine ribonucleoside salvage"/>
    <property type="evidence" value="ECO:0007669"/>
    <property type="project" value="UniProtKB-KW"/>
</dbReference>
<dbReference type="CDD" id="cd06223">
    <property type="entry name" value="PRTases_typeI"/>
    <property type="match status" value="1"/>
</dbReference>
<dbReference type="FunFam" id="3.40.50.2020:FF:000004">
    <property type="entry name" value="Adenine phosphoribosyltransferase"/>
    <property type="match status" value="1"/>
</dbReference>
<dbReference type="Gene3D" id="3.40.50.2020">
    <property type="match status" value="1"/>
</dbReference>
<dbReference type="HAMAP" id="MF_00004">
    <property type="entry name" value="Aden_phosphoribosyltr"/>
    <property type="match status" value="1"/>
</dbReference>
<dbReference type="InterPro" id="IPR005764">
    <property type="entry name" value="Ade_phspho_trans"/>
</dbReference>
<dbReference type="InterPro" id="IPR050120">
    <property type="entry name" value="Adenine_PRTase"/>
</dbReference>
<dbReference type="InterPro" id="IPR000836">
    <property type="entry name" value="PRibTrfase_dom"/>
</dbReference>
<dbReference type="InterPro" id="IPR029057">
    <property type="entry name" value="PRTase-like"/>
</dbReference>
<dbReference type="NCBIfam" id="TIGR01090">
    <property type="entry name" value="apt"/>
    <property type="match status" value="1"/>
</dbReference>
<dbReference type="NCBIfam" id="NF002632">
    <property type="entry name" value="PRK02304.1-1"/>
    <property type="match status" value="1"/>
</dbReference>
<dbReference type="NCBIfam" id="NF002634">
    <property type="entry name" value="PRK02304.1-3"/>
    <property type="match status" value="1"/>
</dbReference>
<dbReference type="NCBIfam" id="NF002636">
    <property type="entry name" value="PRK02304.1-5"/>
    <property type="match status" value="1"/>
</dbReference>
<dbReference type="PANTHER" id="PTHR11776">
    <property type="entry name" value="ADENINE PHOSPHORIBOSYLTRANSFERASE"/>
    <property type="match status" value="1"/>
</dbReference>
<dbReference type="PANTHER" id="PTHR11776:SF7">
    <property type="entry name" value="PHOSPHORIBOSYLTRANSFERASE DOMAIN-CONTAINING PROTEIN"/>
    <property type="match status" value="1"/>
</dbReference>
<dbReference type="Pfam" id="PF00156">
    <property type="entry name" value="Pribosyltran"/>
    <property type="match status" value="1"/>
</dbReference>
<dbReference type="SUPFAM" id="SSF53271">
    <property type="entry name" value="PRTase-like"/>
    <property type="match status" value="1"/>
</dbReference>
<dbReference type="PROSITE" id="PS00103">
    <property type="entry name" value="PUR_PYR_PR_TRANSFER"/>
    <property type="match status" value="1"/>
</dbReference>
<name>APT_HISS2</name>
<sequence length="179" mass="19620">MNKLELIKSSIKSIPNHPKEGIIFRDITSLTEVPEAFQATIDLIIERYKSKGITKVIGTESRGFIFGAPVALALNVPFILVRKPGKLPRETIAQSYQLEYGQDTLEMHVSSIQAGDNVLVIDDLLATGGTIEATVKLVERLQGQVKHAAFVISLPDLGGEVRLRELGVEPFTLVEFSGH</sequence>
<organism>
    <name type="scientific">Histophilus somni (strain 2336)</name>
    <name type="common">Haemophilus somnus</name>
    <dbReference type="NCBI Taxonomy" id="228400"/>
    <lineage>
        <taxon>Bacteria</taxon>
        <taxon>Pseudomonadati</taxon>
        <taxon>Pseudomonadota</taxon>
        <taxon>Gammaproteobacteria</taxon>
        <taxon>Pasteurellales</taxon>
        <taxon>Pasteurellaceae</taxon>
        <taxon>Histophilus</taxon>
    </lineage>
</organism>
<gene>
    <name evidence="1" type="primary">apt</name>
    <name type="ordered locus">HSM_0362</name>
</gene>
<comment type="function">
    <text evidence="1">Catalyzes a salvage reaction resulting in the formation of AMP, that is energically less costly than de novo synthesis.</text>
</comment>
<comment type="catalytic activity">
    <reaction evidence="1">
        <text>AMP + diphosphate = 5-phospho-alpha-D-ribose 1-diphosphate + adenine</text>
        <dbReference type="Rhea" id="RHEA:16609"/>
        <dbReference type="ChEBI" id="CHEBI:16708"/>
        <dbReference type="ChEBI" id="CHEBI:33019"/>
        <dbReference type="ChEBI" id="CHEBI:58017"/>
        <dbReference type="ChEBI" id="CHEBI:456215"/>
        <dbReference type="EC" id="2.4.2.7"/>
    </reaction>
</comment>
<comment type="pathway">
    <text evidence="1">Purine metabolism; AMP biosynthesis via salvage pathway; AMP from adenine: step 1/1.</text>
</comment>
<comment type="subunit">
    <text evidence="1">Homodimer.</text>
</comment>
<comment type="subcellular location">
    <subcellularLocation>
        <location evidence="1">Cytoplasm</location>
    </subcellularLocation>
</comment>
<comment type="similarity">
    <text evidence="1">Belongs to the purine/pyrimidine phosphoribosyltransferase family.</text>
</comment>
<feature type="chain" id="PRO_1000073795" description="Adenine phosphoribosyltransferase">
    <location>
        <begin position="1"/>
        <end position="179"/>
    </location>
</feature>
<accession>B0UWQ8</accession>
<proteinExistence type="inferred from homology"/>